<name>RL18_PROMM</name>
<gene>
    <name evidence="1" type="primary">rplR</name>
    <name evidence="1" type="synonym">rpl18</name>
    <name type="ordered locus">PMT_1747</name>
</gene>
<proteinExistence type="inferred from homology"/>
<protein>
    <recommendedName>
        <fullName evidence="1">Large ribosomal subunit protein uL18</fullName>
    </recommendedName>
    <alternativeName>
        <fullName evidence="3">50S ribosomal protein L18</fullName>
    </alternativeName>
</protein>
<keyword id="KW-1185">Reference proteome</keyword>
<keyword id="KW-0687">Ribonucleoprotein</keyword>
<keyword id="KW-0689">Ribosomal protein</keyword>
<keyword id="KW-0694">RNA-binding</keyword>
<keyword id="KW-0699">rRNA-binding</keyword>
<dbReference type="EMBL" id="BX548175">
    <property type="protein sequence ID" value="CAE21922.1"/>
    <property type="molecule type" value="Genomic_DNA"/>
</dbReference>
<dbReference type="RefSeq" id="WP_011131114.1">
    <property type="nucleotide sequence ID" value="NC_005071.1"/>
</dbReference>
<dbReference type="SMR" id="Q7V530"/>
<dbReference type="KEGG" id="pmt:PMT_1747"/>
<dbReference type="eggNOG" id="COG0256">
    <property type="taxonomic scope" value="Bacteria"/>
</dbReference>
<dbReference type="HOGENOM" id="CLU_098841_0_1_3"/>
<dbReference type="OrthoDB" id="9810939at2"/>
<dbReference type="Proteomes" id="UP000001423">
    <property type="component" value="Chromosome"/>
</dbReference>
<dbReference type="GO" id="GO:0022625">
    <property type="term" value="C:cytosolic large ribosomal subunit"/>
    <property type="evidence" value="ECO:0007669"/>
    <property type="project" value="TreeGrafter"/>
</dbReference>
<dbReference type="GO" id="GO:0008097">
    <property type="term" value="F:5S rRNA binding"/>
    <property type="evidence" value="ECO:0007669"/>
    <property type="project" value="TreeGrafter"/>
</dbReference>
<dbReference type="GO" id="GO:0003735">
    <property type="term" value="F:structural constituent of ribosome"/>
    <property type="evidence" value="ECO:0007669"/>
    <property type="project" value="InterPro"/>
</dbReference>
<dbReference type="GO" id="GO:0006412">
    <property type="term" value="P:translation"/>
    <property type="evidence" value="ECO:0007669"/>
    <property type="project" value="UniProtKB-UniRule"/>
</dbReference>
<dbReference type="CDD" id="cd00432">
    <property type="entry name" value="Ribosomal_L18_L5e"/>
    <property type="match status" value="1"/>
</dbReference>
<dbReference type="FunFam" id="3.30.420.100:FF:000001">
    <property type="entry name" value="50S ribosomal protein L18"/>
    <property type="match status" value="1"/>
</dbReference>
<dbReference type="Gene3D" id="3.30.420.100">
    <property type="match status" value="1"/>
</dbReference>
<dbReference type="HAMAP" id="MF_01337_B">
    <property type="entry name" value="Ribosomal_uL18_B"/>
    <property type="match status" value="1"/>
</dbReference>
<dbReference type="InterPro" id="IPR004389">
    <property type="entry name" value="Ribosomal_uL18_bac-type"/>
</dbReference>
<dbReference type="InterPro" id="IPR005484">
    <property type="entry name" value="Ribosomal_uL18_bac/euk"/>
</dbReference>
<dbReference type="NCBIfam" id="TIGR00060">
    <property type="entry name" value="L18_bact"/>
    <property type="match status" value="1"/>
</dbReference>
<dbReference type="PANTHER" id="PTHR12899">
    <property type="entry name" value="39S RIBOSOMAL PROTEIN L18, MITOCHONDRIAL"/>
    <property type="match status" value="1"/>
</dbReference>
<dbReference type="PANTHER" id="PTHR12899:SF3">
    <property type="entry name" value="LARGE RIBOSOMAL SUBUNIT PROTEIN UL18M"/>
    <property type="match status" value="1"/>
</dbReference>
<dbReference type="Pfam" id="PF00861">
    <property type="entry name" value="Ribosomal_L18p"/>
    <property type="match status" value="1"/>
</dbReference>
<dbReference type="SUPFAM" id="SSF53137">
    <property type="entry name" value="Translational machinery components"/>
    <property type="match status" value="1"/>
</dbReference>
<comment type="function">
    <text evidence="1">This is one of the proteins that bind and probably mediate the attachment of the 5S RNA into the large ribosomal subunit, where it forms part of the central protuberance.</text>
</comment>
<comment type="subunit">
    <text evidence="1">Part of the 50S ribosomal subunit; part of the 5S rRNA/L5/L18/L25 subcomplex. Contacts the 5S and 23S rRNAs.</text>
</comment>
<comment type="similarity">
    <text evidence="1">Belongs to the universal ribosomal protein uL18 family.</text>
</comment>
<accession>Q7V530</accession>
<sequence length="122" mass="13500">MSNLSRKQQTQKRHRRLRRHLKGTAQRPRLAVFRSNNHIYAQVIDDEAQNTLCAASTLDKDLRTSLKADGSSCDASNAVGDLVAKRALAKGIQQVVFDRGGNLYHGRVKSLADAAREAGLQF</sequence>
<evidence type="ECO:0000255" key="1">
    <source>
        <dbReference type="HAMAP-Rule" id="MF_01337"/>
    </source>
</evidence>
<evidence type="ECO:0000256" key="2">
    <source>
        <dbReference type="SAM" id="MobiDB-lite"/>
    </source>
</evidence>
<evidence type="ECO:0000305" key="3"/>
<organism>
    <name type="scientific">Prochlorococcus marinus (strain MIT 9313)</name>
    <dbReference type="NCBI Taxonomy" id="74547"/>
    <lineage>
        <taxon>Bacteria</taxon>
        <taxon>Bacillati</taxon>
        <taxon>Cyanobacteriota</taxon>
        <taxon>Cyanophyceae</taxon>
        <taxon>Synechococcales</taxon>
        <taxon>Prochlorococcaceae</taxon>
        <taxon>Prochlorococcus</taxon>
    </lineage>
</organism>
<reference key="1">
    <citation type="journal article" date="2003" name="Nature">
        <title>Genome divergence in two Prochlorococcus ecotypes reflects oceanic niche differentiation.</title>
        <authorList>
            <person name="Rocap G."/>
            <person name="Larimer F.W."/>
            <person name="Lamerdin J.E."/>
            <person name="Malfatti S."/>
            <person name="Chain P."/>
            <person name="Ahlgren N.A."/>
            <person name="Arellano A."/>
            <person name="Coleman M."/>
            <person name="Hauser L."/>
            <person name="Hess W.R."/>
            <person name="Johnson Z.I."/>
            <person name="Land M.L."/>
            <person name="Lindell D."/>
            <person name="Post A.F."/>
            <person name="Regala W."/>
            <person name="Shah M."/>
            <person name="Shaw S.L."/>
            <person name="Steglich C."/>
            <person name="Sullivan M.B."/>
            <person name="Ting C.S."/>
            <person name="Tolonen A."/>
            <person name="Webb E.A."/>
            <person name="Zinser E.R."/>
            <person name="Chisholm S.W."/>
        </authorList>
    </citation>
    <scope>NUCLEOTIDE SEQUENCE [LARGE SCALE GENOMIC DNA]</scope>
    <source>
        <strain>MIT 9313</strain>
    </source>
</reference>
<feature type="chain" id="PRO_0000131320" description="Large ribosomal subunit protein uL18">
    <location>
        <begin position="1"/>
        <end position="122"/>
    </location>
</feature>
<feature type="region of interest" description="Disordered" evidence="2">
    <location>
        <begin position="1"/>
        <end position="26"/>
    </location>
</feature>
<feature type="compositionally biased region" description="Basic residues" evidence="2">
    <location>
        <begin position="9"/>
        <end position="22"/>
    </location>
</feature>